<proteinExistence type="inferred from homology"/>
<dbReference type="EC" id="2.1.1.33" evidence="1"/>
<dbReference type="EMBL" id="CP000768">
    <property type="protein sequence ID" value="ABS43838.1"/>
    <property type="molecule type" value="Genomic_DNA"/>
</dbReference>
<dbReference type="SMR" id="A7H2A2"/>
<dbReference type="KEGG" id="cjd:JJD26997_0447"/>
<dbReference type="HOGENOM" id="CLU_041532_0_0_7"/>
<dbReference type="UniPathway" id="UPA00989"/>
<dbReference type="Proteomes" id="UP000002302">
    <property type="component" value="Chromosome"/>
</dbReference>
<dbReference type="GO" id="GO:0043527">
    <property type="term" value="C:tRNA methyltransferase complex"/>
    <property type="evidence" value="ECO:0007669"/>
    <property type="project" value="TreeGrafter"/>
</dbReference>
<dbReference type="GO" id="GO:0008176">
    <property type="term" value="F:tRNA (guanine(46)-N7)-methyltransferase activity"/>
    <property type="evidence" value="ECO:0007669"/>
    <property type="project" value="UniProtKB-UniRule"/>
</dbReference>
<dbReference type="CDD" id="cd02440">
    <property type="entry name" value="AdoMet_MTases"/>
    <property type="match status" value="1"/>
</dbReference>
<dbReference type="Gene3D" id="3.40.50.150">
    <property type="entry name" value="Vaccinia Virus protein VP39"/>
    <property type="match status" value="1"/>
</dbReference>
<dbReference type="HAMAP" id="MF_01057">
    <property type="entry name" value="tRNA_methyltr_TrmB"/>
    <property type="match status" value="1"/>
</dbReference>
<dbReference type="InterPro" id="IPR029063">
    <property type="entry name" value="SAM-dependent_MTases_sf"/>
</dbReference>
<dbReference type="InterPro" id="IPR003358">
    <property type="entry name" value="tRNA_(Gua-N-7)_MeTrfase_Trmb"/>
</dbReference>
<dbReference type="InterPro" id="IPR055361">
    <property type="entry name" value="tRNA_methyltr_TrmB_bact"/>
</dbReference>
<dbReference type="NCBIfam" id="NF010719">
    <property type="entry name" value="PRK14121.1"/>
    <property type="match status" value="1"/>
</dbReference>
<dbReference type="NCBIfam" id="TIGR00091">
    <property type="entry name" value="tRNA (guanosine(46)-N7)-methyltransferase TrmB"/>
    <property type="match status" value="1"/>
</dbReference>
<dbReference type="PANTHER" id="PTHR23417">
    <property type="entry name" value="3-DEOXY-D-MANNO-OCTULOSONIC-ACID TRANSFERASE/TRNA GUANINE-N 7 - -METHYLTRANSFERASE"/>
    <property type="match status" value="1"/>
</dbReference>
<dbReference type="PANTHER" id="PTHR23417:SF14">
    <property type="entry name" value="PENTACOTRIPEPTIDE-REPEAT REGION OF PRORP DOMAIN-CONTAINING PROTEIN"/>
    <property type="match status" value="1"/>
</dbReference>
<dbReference type="Pfam" id="PF02390">
    <property type="entry name" value="Methyltransf_4"/>
    <property type="match status" value="1"/>
</dbReference>
<dbReference type="SUPFAM" id="SSF53335">
    <property type="entry name" value="S-adenosyl-L-methionine-dependent methyltransferases"/>
    <property type="match status" value="1"/>
</dbReference>
<dbReference type="PROSITE" id="PS51625">
    <property type="entry name" value="SAM_MT_TRMB"/>
    <property type="match status" value="1"/>
</dbReference>
<protein>
    <recommendedName>
        <fullName evidence="1">tRNA (guanine-N(7)-)-methyltransferase</fullName>
        <ecNumber evidence="1">2.1.1.33</ecNumber>
    </recommendedName>
    <alternativeName>
        <fullName evidence="1">tRNA (guanine(46)-N(7))-methyltransferase</fullName>
    </alternativeName>
    <alternativeName>
        <fullName evidence="1">tRNA(m7G46)-methyltransferase</fullName>
    </alternativeName>
</protein>
<comment type="function">
    <text evidence="1">Catalyzes the formation of N(7)-methylguanine at position 46 (m7G46) in tRNA.</text>
</comment>
<comment type="catalytic activity">
    <reaction evidence="1">
        <text>guanosine(46) in tRNA + S-adenosyl-L-methionine = N(7)-methylguanosine(46) in tRNA + S-adenosyl-L-homocysteine</text>
        <dbReference type="Rhea" id="RHEA:42708"/>
        <dbReference type="Rhea" id="RHEA-COMP:10188"/>
        <dbReference type="Rhea" id="RHEA-COMP:10189"/>
        <dbReference type="ChEBI" id="CHEBI:57856"/>
        <dbReference type="ChEBI" id="CHEBI:59789"/>
        <dbReference type="ChEBI" id="CHEBI:74269"/>
        <dbReference type="ChEBI" id="CHEBI:74480"/>
        <dbReference type="EC" id="2.1.1.33"/>
    </reaction>
</comment>
<comment type="pathway">
    <text evidence="1">tRNA modification; N(7)-methylguanine-tRNA biosynthesis.</text>
</comment>
<comment type="similarity">
    <text evidence="1">Belongs to the class I-like SAM-binding methyltransferase superfamily. TrmB family.</text>
</comment>
<name>TRMB_CAMJD</name>
<organism>
    <name type="scientific">Campylobacter jejuni subsp. doylei (strain ATCC BAA-1458 / RM4099 / 269.97)</name>
    <dbReference type="NCBI Taxonomy" id="360109"/>
    <lineage>
        <taxon>Bacteria</taxon>
        <taxon>Pseudomonadati</taxon>
        <taxon>Campylobacterota</taxon>
        <taxon>Epsilonproteobacteria</taxon>
        <taxon>Campylobacterales</taxon>
        <taxon>Campylobacteraceae</taxon>
        <taxon>Campylobacter</taxon>
    </lineage>
</organism>
<evidence type="ECO:0000255" key="1">
    <source>
        <dbReference type="HAMAP-Rule" id="MF_01057"/>
    </source>
</evidence>
<feature type="chain" id="PRO_1000064389" description="tRNA (guanine-N(7)-)-methyltransferase">
    <location>
        <begin position="1"/>
        <end position="392"/>
    </location>
</feature>
<feature type="binding site" evidence="1">
    <location>
        <position position="123"/>
    </location>
    <ligand>
        <name>S-adenosyl-L-methionine</name>
        <dbReference type="ChEBI" id="CHEBI:59789"/>
    </ligand>
</feature>
<feature type="binding site" evidence="1">
    <location>
        <position position="148"/>
    </location>
    <ligand>
        <name>S-adenosyl-L-methionine</name>
        <dbReference type="ChEBI" id="CHEBI:59789"/>
    </ligand>
</feature>
<feature type="binding site" evidence="1">
    <location>
        <position position="175"/>
    </location>
    <ligand>
        <name>S-adenosyl-L-methionine</name>
        <dbReference type="ChEBI" id="CHEBI:59789"/>
    </ligand>
</feature>
<feature type="binding site" evidence="1">
    <location>
        <position position="201"/>
    </location>
    <ligand>
        <name>substrate</name>
    </ligand>
</feature>
<feature type="binding site" evidence="1">
    <location>
        <position position="231"/>
    </location>
    <ligand>
        <name>substrate</name>
    </ligand>
</feature>
<sequence>MPNFKSKKIKEINLPYSKDDVEFLWFAKNDNVSLIYTKVQEESFFLQIKKAQNGFVIKGDKHTKPSKIGYLQKALKIFKEGFCEDIINEAFGLKNNALIEKTPFIVDNFDELLSKLQGKIYIEIGFGSGRHLLYQAKENPNVLILGVEIYNPALTQVAKLAKAQNVNNILLIQSDARLLLSVLKSKSVEKIFLHFPVPWGKKPHRRVIGKDFCKECARVLVQNGRFELRTDSFEYFNFTLEQFLTFPAPKFSLRKNENLEISSKYEDRWKKQEKNIYDLWVWNFNQECQNYELNEFNLSSVEFSKEDLKKIEQNFKNITIKKDDFFLHFESIYKQDENLLLKVAFGAFNKSEHCYLHLDKTIDFAFKEPFKIQENIKAINELKEILKVQFKI</sequence>
<gene>
    <name evidence="1" type="primary">trmB</name>
    <name type="ordered locus">JJD26997_0447</name>
</gene>
<keyword id="KW-0489">Methyltransferase</keyword>
<keyword id="KW-0949">S-adenosyl-L-methionine</keyword>
<keyword id="KW-0808">Transferase</keyword>
<keyword id="KW-0819">tRNA processing</keyword>
<accession>A7H2A2</accession>
<reference key="1">
    <citation type="submission" date="2007-07" db="EMBL/GenBank/DDBJ databases">
        <title>Complete genome sequence of Campylobacter jejuni subsp doylei 269.97 isolated from human blood.</title>
        <authorList>
            <person name="Fouts D.E."/>
            <person name="Mongodin E.F."/>
            <person name="Puiu D."/>
            <person name="Sebastian Y."/>
            <person name="Miller W.G."/>
            <person name="Mandrell R.E."/>
            <person name="Lastovica A.J."/>
            <person name="Nelson K.E."/>
        </authorList>
    </citation>
    <scope>NUCLEOTIDE SEQUENCE [LARGE SCALE GENOMIC DNA]</scope>
    <source>
        <strain>ATCC BAA-1458 / RM4099 / 269.97</strain>
    </source>
</reference>